<sequence length="333" mass="37038">MNDTLALLQKFNAHPDSRCWYVAWNPKGTLLASCGGDRTIRIWGREGDSWECKTVLQDGHQRTVRKVAWSPCGNYLASASFDATTCIWKKKNDDFECLTVLEGHENEVKCVAWAPSGNLLATCSRDKSVWIWEVDEENEYECVSVVNSHTQDVKHVVWHPTQELLASCSYDNNVCVYKEEDDDWECRATLEGHTSTVWGLTFDPSGQRLASCSDDCTVKIWKECQPEGGQEGTDAAWKCVCTLSGFHGRTVYDIAWCPLTGALATACGDDGVRVFKEDETADPDQPAFSLSAHVPKAHTQDVNCIAWHPKEAGLLVSCSDNGEIAVWNYQSGV</sequence>
<organism>
    <name type="scientific">Salmo salar</name>
    <name type="common">Atlantic salmon</name>
    <dbReference type="NCBI Taxonomy" id="8030"/>
    <lineage>
        <taxon>Eukaryota</taxon>
        <taxon>Metazoa</taxon>
        <taxon>Chordata</taxon>
        <taxon>Craniata</taxon>
        <taxon>Vertebrata</taxon>
        <taxon>Euteleostomi</taxon>
        <taxon>Actinopterygii</taxon>
        <taxon>Neopterygii</taxon>
        <taxon>Teleostei</taxon>
        <taxon>Protacanthopterygii</taxon>
        <taxon>Salmoniformes</taxon>
        <taxon>Salmonidae</taxon>
        <taxon>Salmoninae</taxon>
        <taxon>Salmo</taxon>
    </lineage>
</organism>
<name>CIO1B_SALSA</name>
<protein>
    <recommendedName>
        <fullName evidence="1">Probable cytosolic iron-sulfur protein assembly protein ciao1-B</fullName>
    </recommendedName>
    <alternativeName>
        <fullName evidence="1">WD repeat-containing protein 39-B</fullName>
    </alternativeName>
</protein>
<feature type="chain" id="PRO_0000382478" description="Probable cytosolic iron-sulfur protein assembly protein ciao1-B">
    <location>
        <begin position="1"/>
        <end position="333"/>
    </location>
</feature>
<feature type="repeat" description="WD 1">
    <location>
        <begin position="14"/>
        <end position="53"/>
    </location>
</feature>
<feature type="repeat" description="WD 2">
    <location>
        <begin position="59"/>
        <end position="98"/>
    </location>
</feature>
<feature type="repeat" description="WD 3">
    <location>
        <begin position="103"/>
        <end position="142"/>
    </location>
</feature>
<feature type="repeat" description="WD 4">
    <location>
        <begin position="148"/>
        <end position="187"/>
    </location>
</feature>
<feature type="repeat" description="WD 5">
    <location>
        <begin position="192"/>
        <end position="231"/>
    </location>
</feature>
<feature type="repeat" description="WD 6">
    <location>
        <begin position="246"/>
        <end position="285"/>
    </location>
</feature>
<feature type="repeat" description="WD 7">
    <location>
        <begin position="297"/>
        <end position="333"/>
    </location>
</feature>
<proteinExistence type="evidence at transcript level"/>
<reference key="1">
    <citation type="journal article" date="2010" name="BMC Genomics">
        <title>Salmo salar and Esox lucius full-length cDNA sequences reveal changes in evolutionary pressures on a post-tetraploidization genome.</title>
        <authorList>
            <person name="Leong J.S."/>
            <person name="Jantzen S.G."/>
            <person name="von Schalburg K.R."/>
            <person name="Cooper G.A."/>
            <person name="Messmer A.M."/>
            <person name="Liao N.Y."/>
            <person name="Munro S."/>
            <person name="Moore R."/>
            <person name="Holt R.A."/>
            <person name="Jones S.J."/>
            <person name="Davidson W.S."/>
            <person name="Koop B.F."/>
        </authorList>
    </citation>
    <scope>NUCLEOTIDE SEQUENCE [LARGE SCALE MRNA]</scope>
    <source>
        <tissue>Brain</tissue>
    </source>
</reference>
<comment type="function">
    <text evidence="1">Key component of the cytosolic iron-sulfur protein assembly (CIA) complex, a multiprotein complex that mediates the incorporation of iron-sulfur cluster into extramitochondrial Fe/S proteins.</text>
</comment>
<comment type="subunit">
    <text evidence="1">Component of the CIA complex.</text>
</comment>
<comment type="similarity">
    <text evidence="1">Belongs to the WD repeat CIA1 family.</text>
</comment>
<evidence type="ECO:0000255" key="1">
    <source>
        <dbReference type="HAMAP-Rule" id="MF_03037"/>
    </source>
</evidence>
<gene>
    <name type="primary">ciao1b</name>
</gene>
<accession>B5X212</accession>
<keyword id="KW-1185">Reference proteome</keyword>
<keyword id="KW-0677">Repeat</keyword>
<keyword id="KW-0853">WD repeat</keyword>
<dbReference type="EMBL" id="BT045081">
    <property type="protein sequence ID" value="ACI33343.1"/>
    <property type="molecule type" value="mRNA"/>
</dbReference>
<dbReference type="RefSeq" id="XP_014027367.1">
    <property type="nucleotide sequence ID" value="XM_014171892.1"/>
</dbReference>
<dbReference type="SMR" id="B5X212"/>
<dbReference type="STRING" id="8030.ENSSSAP00000117557"/>
<dbReference type="PaxDb" id="8030-ENSSSAP00000117557"/>
<dbReference type="Ensembl" id="ENSSSAT00020197793">
    <property type="protein sequence ID" value="ENSSSAP00020148482"/>
    <property type="gene ID" value="ENSSSAG00020083069"/>
</dbReference>
<dbReference type="Ensembl" id="ENSSSAT00070038246">
    <property type="protein sequence ID" value="ENSSSAP00070036497"/>
    <property type="gene ID" value="ENSSSAG00070023977"/>
</dbReference>
<dbReference type="Ensembl" id="ENSSSAT00075053107">
    <property type="protein sequence ID" value="ENSSSAP00075036734"/>
    <property type="gene ID" value="ENSSSAG00075025532"/>
</dbReference>
<dbReference type="GeneID" id="106585549"/>
<dbReference type="KEGG" id="sasa:106585549"/>
<dbReference type="Proteomes" id="UP000087266">
    <property type="component" value="Chromosome ssa24"/>
</dbReference>
<dbReference type="Bgee" id="ENSSSAG00000080516">
    <property type="expression patterns" value="Expressed in ovary and 24 other cell types or tissues"/>
</dbReference>
<dbReference type="GO" id="GO:0097361">
    <property type="term" value="C:cytosolic [4Fe-4S] assembly targeting complex"/>
    <property type="evidence" value="ECO:0000250"/>
    <property type="project" value="UniProtKB"/>
</dbReference>
<dbReference type="GO" id="GO:0016226">
    <property type="term" value="P:iron-sulfur cluster assembly"/>
    <property type="evidence" value="ECO:0007669"/>
    <property type="project" value="UniProtKB-UniRule"/>
</dbReference>
<dbReference type="GO" id="GO:0051604">
    <property type="term" value="P:protein maturation"/>
    <property type="evidence" value="ECO:0000250"/>
    <property type="project" value="UniProtKB"/>
</dbReference>
<dbReference type="CDD" id="cd00200">
    <property type="entry name" value="WD40"/>
    <property type="match status" value="1"/>
</dbReference>
<dbReference type="FunFam" id="2.130.10.10:FF:000136">
    <property type="entry name" value="Probable cytosolic iron-sulfur protein assembly protein CIAO1"/>
    <property type="match status" value="1"/>
</dbReference>
<dbReference type="Gene3D" id="2.130.10.10">
    <property type="entry name" value="YVTN repeat-like/Quinoprotein amine dehydrogenase"/>
    <property type="match status" value="1"/>
</dbReference>
<dbReference type="HAMAP" id="MF_03037">
    <property type="entry name" value="ciao1"/>
    <property type="match status" value="1"/>
</dbReference>
<dbReference type="InterPro" id="IPR028608">
    <property type="entry name" value="CIAO1/Cia1"/>
</dbReference>
<dbReference type="InterPro" id="IPR015943">
    <property type="entry name" value="WD40/YVTN_repeat-like_dom_sf"/>
</dbReference>
<dbReference type="InterPro" id="IPR019775">
    <property type="entry name" value="WD40_repeat_CS"/>
</dbReference>
<dbReference type="InterPro" id="IPR036322">
    <property type="entry name" value="WD40_repeat_dom_sf"/>
</dbReference>
<dbReference type="InterPro" id="IPR001680">
    <property type="entry name" value="WD40_rpt"/>
</dbReference>
<dbReference type="PANTHER" id="PTHR19920:SF0">
    <property type="entry name" value="CYTOSOLIC IRON-SULFUR PROTEIN ASSEMBLY PROTEIN CIAO1-RELATED"/>
    <property type="match status" value="1"/>
</dbReference>
<dbReference type="PANTHER" id="PTHR19920">
    <property type="entry name" value="WD40 PROTEIN CIAO1"/>
    <property type="match status" value="1"/>
</dbReference>
<dbReference type="Pfam" id="PF23389">
    <property type="entry name" value="Beta-prop_WDR19_1st"/>
    <property type="match status" value="1"/>
</dbReference>
<dbReference type="Pfam" id="PF00400">
    <property type="entry name" value="WD40"/>
    <property type="match status" value="2"/>
</dbReference>
<dbReference type="SMART" id="SM00320">
    <property type="entry name" value="WD40"/>
    <property type="match status" value="7"/>
</dbReference>
<dbReference type="SUPFAM" id="SSF50978">
    <property type="entry name" value="WD40 repeat-like"/>
    <property type="match status" value="1"/>
</dbReference>
<dbReference type="PROSITE" id="PS00678">
    <property type="entry name" value="WD_REPEATS_1"/>
    <property type="match status" value="1"/>
</dbReference>
<dbReference type="PROSITE" id="PS50082">
    <property type="entry name" value="WD_REPEATS_2"/>
    <property type="match status" value="6"/>
</dbReference>
<dbReference type="PROSITE" id="PS50294">
    <property type="entry name" value="WD_REPEATS_REGION"/>
    <property type="match status" value="1"/>
</dbReference>